<comment type="function">
    <text evidence="1">Part of an energy-coupled inorganic carbon pump.</text>
</comment>
<comment type="cofactor">
    <cofactor evidence="1">
        <name>Zn(2+)</name>
        <dbReference type="ChEBI" id="CHEBI:29105"/>
    </cofactor>
</comment>
<comment type="subunit">
    <text evidence="1">Forms a complex with DabB.</text>
</comment>
<comment type="subcellular location">
    <subcellularLocation>
        <location evidence="1">Cell membrane</location>
        <topology evidence="1">Peripheral membrane protein</topology>
    </subcellularLocation>
</comment>
<comment type="similarity">
    <text evidence="1">Belongs to the inorganic carbon transporter (TC 9.A.2) DabA family.</text>
</comment>
<protein>
    <recommendedName>
        <fullName evidence="1">Probable inorganic carbon transporter subunit DabA</fullName>
    </recommendedName>
</protein>
<name>DABA_BACAC</name>
<proteinExistence type="inferred from homology"/>
<keyword id="KW-1003">Cell membrane</keyword>
<keyword id="KW-0472">Membrane</keyword>
<keyword id="KW-0479">Metal-binding</keyword>
<keyword id="KW-0813">Transport</keyword>
<keyword id="KW-0862">Zinc</keyword>
<dbReference type="EMBL" id="CP001215">
    <property type="protein sequence ID" value="ACP13311.1"/>
    <property type="molecule type" value="Genomic_DNA"/>
</dbReference>
<dbReference type="RefSeq" id="WP_000026985.1">
    <property type="nucleotide sequence ID" value="NC_012581.1"/>
</dbReference>
<dbReference type="SMR" id="C3LDL4"/>
<dbReference type="KEGG" id="bah:BAMEG_1429"/>
<dbReference type="HOGENOM" id="CLU_009885_0_0_9"/>
<dbReference type="GO" id="GO:0005886">
    <property type="term" value="C:plasma membrane"/>
    <property type="evidence" value="ECO:0007669"/>
    <property type="project" value="UniProtKB-SubCell"/>
</dbReference>
<dbReference type="GO" id="GO:0008270">
    <property type="term" value="F:zinc ion binding"/>
    <property type="evidence" value="ECO:0007669"/>
    <property type="project" value="UniProtKB-UniRule"/>
</dbReference>
<dbReference type="HAMAP" id="MF_01871">
    <property type="entry name" value="DabA"/>
    <property type="match status" value="1"/>
</dbReference>
<dbReference type="InterPro" id="IPR018752">
    <property type="entry name" value="DabA"/>
</dbReference>
<dbReference type="PANTHER" id="PTHR38344:SF1">
    <property type="entry name" value="INORGANIC CARBON TRANSPORTER SUBUNIT DABA-RELATED"/>
    <property type="match status" value="1"/>
</dbReference>
<dbReference type="PANTHER" id="PTHR38344">
    <property type="entry name" value="UPF0753 PROTEIN AQ_863"/>
    <property type="match status" value="1"/>
</dbReference>
<dbReference type="Pfam" id="PF10070">
    <property type="entry name" value="DabA"/>
    <property type="match status" value="1"/>
</dbReference>
<reference key="1">
    <citation type="submission" date="2008-10" db="EMBL/GenBank/DDBJ databases">
        <title>Genome sequence of Bacillus anthracis str. CDC 684.</title>
        <authorList>
            <person name="Dodson R.J."/>
            <person name="Munk A.C."/>
            <person name="Brettin T."/>
            <person name="Bruce D."/>
            <person name="Detter C."/>
            <person name="Tapia R."/>
            <person name="Han C."/>
            <person name="Sutton G."/>
            <person name="Sims D."/>
        </authorList>
    </citation>
    <scope>NUCLEOTIDE SEQUENCE [LARGE SCALE GENOMIC DNA]</scope>
    <source>
        <strain>CDC 684 / NRRL 3495</strain>
    </source>
</reference>
<organism>
    <name type="scientific">Bacillus anthracis (strain CDC 684 / NRRL 3495)</name>
    <dbReference type="NCBI Taxonomy" id="568206"/>
    <lineage>
        <taxon>Bacteria</taxon>
        <taxon>Bacillati</taxon>
        <taxon>Bacillota</taxon>
        <taxon>Bacilli</taxon>
        <taxon>Bacillales</taxon>
        <taxon>Bacillaceae</taxon>
        <taxon>Bacillus</taxon>
        <taxon>Bacillus cereus group</taxon>
    </lineage>
</organism>
<sequence>MSIPSILRKETLKKKDKNIDLQENNINDLVVSASRVIAPLWPISTFAAHHPWMGLEKQSFEQVANWLKEARNVDIYPSASMIHSAKAKGEIEESFLQIALSRWLDSQSFHMPRETAERFCQEALKLERLPSSLLSSPELNKLAEEINYVNTGSMKDSSMQPISSLIENQNGDNLSDILNYHIIKWCKLYLDDAGASWAMPNREKGFYRAWQHLITFDPALSKTERKVLKDWPEDALIALTKALSELGISESNMQAYLEGHLLSLPGWAGMIRWRSQQSIEEQELLIEYLAVRLSMELAIVKPYLPLKNQKVEKKVSIVPLIASWIYWGDISIEKWLQMSATEQSELLAFAYRFDENTRKKLWLEAWEQTHAEQLREKIASKQRATHDKKRVVAQLAFCIDVRSEPFRRHLEKLGPFETFGIAGFFGLPIATTELGSNDSHPSLPVILKPKHQIKELTDENECKSYEQRKMVGSSVRYTFKTMKQNVLTSMLLPEVSGPLLGLQMVTRSFVPRRVGGFIRNLRKNMLQKPDTTFSLNHVHDTNCEIPIGFTKEEKVNYVRQTLKMVGLTEGFAPLVVMCGHSSQSTNNPYAAALECGACGGAAGGFNARVFATLCNLPEVREALSAEGIKIPDDTIFAAAEHKTTVDELEWIYVPELSETAQEAFDCIEAIMPNVSQHANRERLMQLPHFKTKIKNPSKEAHRFAEDWSEIRPEWGLARNASFIIGQRELTQECDLEGRAFLHNYDWKQDESGDILANIIAGPGTVAQWINLQYYASTVAPHYYGSGNKATQTVTAGLGVMQGNASDLLPGLPWQSVMQSDRETYHSPLRLLIVIQAPTKYIERLLNNNFTFREKVQNGWVRLASVDPEGRWKNW</sequence>
<gene>
    <name evidence="1" type="primary">dabA</name>
    <name type="ordered locus">BAMEG_1429</name>
</gene>
<accession>C3LDL4</accession>
<feature type="chain" id="PRO_0000387236" description="Probable inorganic carbon transporter subunit DabA">
    <location>
        <begin position="1"/>
        <end position="874"/>
    </location>
</feature>
<feature type="binding site" evidence="1">
    <location>
        <position position="398"/>
    </location>
    <ligand>
        <name>Zn(2+)</name>
        <dbReference type="ChEBI" id="CHEBI:29105"/>
    </ligand>
</feature>
<feature type="binding site" evidence="1">
    <location>
        <position position="400"/>
    </location>
    <ligand>
        <name>Zn(2+)</name>
        <dbReference type="ChEBI" id="CHEBI:29105"/>
    </ligand>
</feature>
<feature type="binding site" evidence="1">
    <location>
        <position position="580"/>
    </location>
    <ligand>
        <name>Zn(2+)</name>
        <dbReference type="ChEBI" id="CHEBI:29105"/>
    </ligand>
</feature>
<feature type="binding site" evidence="1">
    <location>
        <position position="595"/>
    </location>
    <ligand>
        <name>Zn(2+)</name>
        <dbReference type="ChEBI" id="CHEBI:29105"/>
    </ligand>
</feature>
<evidence type="ECO:0000255" key="1">
    <source>
        <dbReference type="HAMAP-Rule" id="MF_01871"/>
    </source>
</evidence>